<sequence>MMEWIDENSSLFVPPVCNKLMYGEGQLKIMFVGGPNTRKDYHLEEGEELFFQVKGDMCLKVLEKGKPKDIIIKEGEMFLLPSRFNHSPQRFENTVGLVIERERLPEEIDGLRYFCEDGVTVLWEKFFHCTDLTQIAPVIKEFFESEEHKTGKPSKESSCSINVDTETELMEPFPLKQWLKDNKDSYRSGSMAIFEKGEFKVHAHGSGEQEGHSQGEMWFWQLEGKATVNVDEITRELNKNDVLMITAGSDFRVKREEGSVGLSITVDSLANK</sequence>
<comment type="function">
    <text evidence="1">Catalyzes the oxidative ring opening of 3-hydroxyanthranilate to 2-amino-3-carboxymuconate semialdehyde, which spontaneously cyclizes to quinolinate.</text>
</comment>
<comment type="catalytic activity">
    <reaction evidence="1">
        <text>3-hydroxyanthranilate + O2 = (2Z,4Z)-2-amino-3-carboxymuconate 6-semialdehyde</text>
        <dbReference type="Rhea" id="RHEA:17953"/>
        <dbReference type="ChEBI" id="CHEBI:15379"/>
        <dbReference type="ChEBI" id="CHEBI:36559"/>
        <dbReference type="ChEBI" id="CHEBI:77612"/>
        <dbReference type="EC" id="1.13.11.6"/>
    </reaction>
</comment>
<comment type="cofactor">
    <cofactor evidence="1">
        <name>Fe(2+)</name>
        <dbReference type="ChEBI" id="CHEBI:29033"/>
    </cofactor>
</comment>
<comment type="pathway">
    <text evidence="1">Cofactor biosynthesis; NAD(+) biosynthesis; quinolinate from L-kynurenine: step 3/3.</text>
</comment>
<comment type="subcellular location">
    <subcellularLocation>
        <location evidence="1">Cytoplasm</location>
    </subcellularLocation>
</comment>
<comment type="similarity">
    <text evidence="1">Belongs to the 3-HAO family.</text>
</comment>
<name>3HAO_NEMVE</name>
<accession>A7RIT9</accession>
<evidence type="ECO:0000255" key="1">
    <source>
        <dbReference type="HAMAP-Rule" id="MF_03019"/>
    </source>
</evidence>
<dbReference type="EC" id="1.13.11.6" evidence="1"/>
<dbReference type="EMBL" id="DS469513">
    <property type="protein sequence ID" value="EDO48567.1"/>
    <property type="molecule type" value="Genomic_DNA"/>
</dbReference>
<dbReference type="RefSeq" id="XP_001640630.1">
    <property type="nucleotide sequence ID" value="XM_001640580.1"/>
</dbReference>
<dbReference type="SMR" id="A7RIT9"/>
<dbReference type="STRING" id="45351.A7RIT9"/>
<dbReference type="EnsemblMetazoa" id="EDO48567">
    <property type="protein sequence ID" value="EDO48567"/>
    <property type="gene ID" value="NEMVEDRAFT_v1g178517"/>
</dbReference>
<dbReference type="KEGG" id="nve:5520803"/>
<dbReference type="eggNOG" id="KOG3995">
    <property type="taxonomic scope" value="Eukaryota"/>
</dbReference>
<dbReference type="HOGENOM" id="CLU_064845_1_0_1"/>
<dbReference type="InParanoid" id="A7RIT9"/>
<dbReference type="OMA" id="MWLWQLE"/>
<dbReference type="OrthoDB" id="204928at2759"/>
<dbReference type="PhylomeDB" id="A7RIT9"/>
<dbReference type="UniPathway" id="UPA00253">
    <property type="reaction ID" value="UER00330"/>
</dbReference>
<dbReference type="Proteomes" id="UP000001593">
    <property type="component" value="Unassembled WGS sequence"/>
</dbReference>
<dbReference type="GO" id="GO:0005737">
    <property type="term" value="C:cytoplasm"/>
    <property type="evidence" value="ECO:0000318"/>
    <property type="project" value="GO_Central"/>
</dbReference>
<dbReference type="GO" id="GO:0000334">
    <property type="term" value="F:3-hydroxyanthranilate 3,4-dioxygenase activity"/>
    <property type="evidence" value="ECO:0000318"/>
    <property type="project" value="GO_Central"/>
</dbReference>
<dbReference type="GO" id="GO:0008198">
    <property type="term" value="F:ferrous iron binding"/>
    <property type="evidence" value="ECO:0007669"/>
    <property type="project" value="UniProtKB-UniRule"/>
</dbReference>
<dbReference type="GO" id="GO:0034354">
    <property type="term" value="P:'de novo' NAD biosynthetic process from L-tryptophan"/>
    <property type="evidence" value="ECO:0000318"/>
    <property type="project" value="GO_Central"/>
</dbReference>
<dbReference type="GO" id="GO:0043420">
    <property type="term" value="P:anthranilate metabolic process"/>
    <property type="evidence" value="ECO:0007669"/>
    <property type="project" value="UniProtKB-UniRule"/>
</dbReference>
<dbReference type="GO" id="GO:0006569">
    <property type="term" value="P:L-tryptophan catabolic process"/>
    <property type="evidence" value="ECO:0007669"/>
    <property type="project" value="UniProtKB-UniRule"/>
</dbReference>
<dbReference type="GO" id="GO:0019805">
    <property type="term" value="P:quinolinate biosynthetic process"/>
    <property type="evidence" value="ECO:0007669"/>
    <property type="project" value="UniProtKB-UniRule"/>
</dbReference>
<dbReference type="GO" id="GO:0046874">
    <property type="term" value="P:quinolinate metabolic process"/>
    <property type="evidence" value="ECO:0000318"/>
    <property type="project" value="GO_Central"/>
</dbReference>
<dbReference type="CDD" id="cd06123">
    <property type="entry name" value="cupin_HAO"/>
    <property type="match status" value="1"/>
</dbReference>
<dbReference type="FunFam" id="2.60.120.10:FF:000077">
    <property type="entry name" value="3-hydroxyanthranilate 3,4-dioxygenase"/>
    <property type="match status" value="1"/>
</dbReference>
<dbReference type="Gene3D" id="2.60.120.10">
    <property type="entry name" value="Jelly Rolls"/>
    <property type="match status" value="1"/>
</dbReference>
<dbReference type="HAMAP" id="MF_00825">
    <property type="entry name" value="3_HAO"/>
    <property type="match status" value="1"/>
</dbReference>
<dbReference type="InterPro" id="IPR010329">
    <property type="entry name" value="3hydroanth_dOase"/>
</dbReference>
<dbReference type="InterPro" id="IPR014710">
    <property type="entry name" value="RmlC-like_jellyroll"/>
</dbReference>
<dbReference type="InterPro" id="IPR011051">
    <property type="entry name" value="RmlC_Cupin_sf"/>
</dbReference>
<dbReference type="NCBIfam" id="TIGR03037">
    <property type="entry name" value="anthran_nbaC"/>
    <property type="match status" value="1"/>
</dbReference>
<dbReference type="PANTHER" id="PTHR15497">
    <property type="entry name" value="3-HYDROXYANTHRANILATE 3,4-DIOXYGENASE"/>
    <property type="match status" value="1"/>
</dbReference>
<dbReference type="PANTHER" id="PTHR15497:SF1">
    <property type="entry name" value="3-HYDROXYANTHRANILATE 3,4-DIOXYGENASE"/>
    <property type="match status" value="1"/>
</dbReference>
<dbReference type="Pfam" id="PF06052">
    <property type="entry name" value="3-HAO"/>
    <property type="match status" value="1"/>
</dbReference>
<dbReference type="SUPFAM" id="SSF51182">
    <property type="entry name" value="RmlC-like cupins"/>
    <property type="match status" value="2"/>
</dbReference>
<protein>
    <recommendedName>
        <fullName evidence="1">3-hydroxyanthranilate 3,4-dioxygenase</fullName>
        <ecNumber evidence="1">1.13.11.6</ecNumber>
    </recommendedName>
    <alternativeName>
        <fullName evidence="1">3-hydroxyanthranilate oxygenase</fullName>
        <shortName evidence="1">3-HAO</shortName>
    </alternativeName>
    <alternativeName>
        <fullName evidence="1">3-hydroxyanthranilic acid dioxygenase</fullName>
        <shortName evidence="1">HAD</shortName>
    </alternativeName>
</protein>
<feature type="chain" id="PRO_0000361973" description="3-hydroxyanthranilate 3,4-dioxygenase">
    <location>
        <begin position="1"/>
        <end position="272"/>
    </location>
</feature>
<feature type="region of interest" description="Domain A (catalytic)" evidence="1">
    <location>
        <begin position="1"/>
        <end position="154"/>
    </location>
</feature>
<feature type="region of interest" description="Linker" evidence="1">
    <location>
        <begin position="155"/>
        <end position="169"/>
    </location>
</feature>
<feature type="region of interest" description="Domain B" evidence="1">
    <location>
        <begin position="170"/>
        <end position="272"/>
    </location>
</feature>
<feature type="binding site" evidence="1">
    <location>
        <position position="38"/>
    </location>
    <ligand>
        <name>O2</name>
        <dbReference type="ChEBI" id="CHEBI:15379"/>
    </ligand>
</feature>
<feature type="binding site" evidence="1">
    <location>
        <position position="42"/>
    </location>
    <ligand>
        <name>Fe cation</name>
        <dbReference type="ChEBI" id="CHEBI:24875"/>
        <note>catalytic</note>
    </ligand>
</feature>
<feature type="binding site" evidence="1">
    <location>
        <position position="48"/>
    </location>
    <ligand>
        <name>Fe cation</name>
        <dbReference type="ChEBI" id="CHEBI:24875"/>
        <note>catalytic</note>
    </ligand>
</feature>
<feature type="binding site" evidence="1">
    <location>
        <position position="48"/>
    </location>
    <ligand>
        <name>substrate</name>
    </ligand>
</feature>
<feature type="binding site" evidence="1">
    <location>
        <position position="86"/>
    </location>
    <ligand>
        <name>Fe cation</name>
        <dbReference type="ChEBI" id="CHEBI:24875"/>
        <note>catalytic</note>
    </ligand>
</feature>
<feature type="binding site" evidence="1">
    <location>
        <position position="90"/>
    </location>
    <ligand>
        <name>substrate</name>
    </ligand>
</feature>
<feature type="binding site" evidence="1">
    <location>
        <position position="100"/>
    </location>
    <ligand>
        <name>substrate</name>
    </ligand>
</feature>
<organism>
    <name type="scientific">Nematostella vectensis</name>
    <name type="common">Starlet sea anemone</name>
    <dbReference type="NCBI Taxonomy" id="45351"/>
    <lineage>
        <taxon>Eukaryota</taxon>
        <taxon>Metazoa</taxon>
        <taxon>Cnidaria</taxon>
        <taxon>Anthozoa</taxon>
        <taxon>Hexacorallia</taxon>
        <taxon>Actiniaria</taxon>
        <taxon>Edwardsiidae</taxon>
        <taxon>Nematostella</taxon>
    </lineage>
</organism>
<proteinExistence type="inferred from homology"/>
<reference key="1">
    <citation type="journal article" date="2007" name="Science">
        <title>Sea anemone genome reveals ancestral eumetazoan gene repertoire and genomic organization.</title>
        <authorList>
            <person name="Putnam N.H."/>
            <person name="Srivastava M."/>
            <person name="Hellsten U."/>
            <person name="Dirks B."/>
            <person name="Chapman J."/>
            <person name="Salamov A."/>
            <person name="Terry A."/>
            <person name="Shapiro H."/>
            <person name="Lindquist E."/>
            <person name="Kapitonov V.V."/>
            <person name="Jurka J."/>
            <person name="Genikhovich G."/>
            <person name="Grigoriev I.V."/>
            <person name="Lucas S.M."/>
            <person name="Steele R.E."/>
            <person name="Finnerty J.R."/>
            <person name="Technau U."/>
            <person name="Martindale M.Q."/>
            <person name="Rokhsar D.S."/>
        </authorList>
    </citation>
    <scope>NUCLEOTIDE SEQUENCE [LARGE SCALE GENOMIC DNA]</scope>
    <source>
        <strain>CH2 X CH6</strain>
    </source>
</reference>
<keyword id="KW-0963">Cytoplasm</keyword>
<keyword id="KW-0223">Dioxygenase</keyword>
<keyword id="KW-0408">Iron</keyword>
<keyword id="KW-0479">Metal-binding</keyword>
<keyword id="KW-0560">Oxidoreductase</keyword>
<keyword id="KW-0662">Pyridine nucleotide biosynthesis</keyword>
<keyword id="KW-1185">Reference proteome</keyword>
<gene>
    <name type="ORF">v1g178517</name>
</gene>